<sequence length="424" mass="44615">MNLSILAALALVSFSTASTEQQSPLFSHADRSPKSIIDASPFLSLHRDLVSIPSVSGNESAVGEFLASFLESHNFNVIKQPVEGRTSRFNVFAYPSSAPSKPSILLTSHIDTVPPFIPYSVQYSDNERDIVISGRGCDDAKGSVAAQVVAALETLAENPSAPLALLFVVDEEVGGAGMRAFSFNTTLNPSPDSPSSLVDGYKTIIFGEPTDLALVSGHKGMLSFHVHVTGKSSHSGYPWLGESALSTILPALSVIDKLGDIPVEKGGLPSSEKYGRTTVNIGRVEAGVAGNVVPAAADADVTVRLAAGTPEEAMDIVLAAVANATGDNPHVVVKFAEGPNGGVGGYAPQDLDTDVPGFEITTVNYGTDVPNLKVYEENDVKRYLYGPGSIHVAHGDHESITVAQLEEAVKGYKKLITAALERIY</sequence>
<keyword id="KW-0325">Glycoprotein</keyword>
<keyword id="KW-0378">Hydrolase</keyword>
<keyword id="KW-0479">Metal-binding</keyword>
<keyword id="KW-0645">Protease</keyword>
<keyword id="KW-1185">Reference proteome</keyword>
<keyword id="KW-0964">Secreted</keyword>
<keyword id="KW-0732">Signal</keyword>
<keyword id="KW-0862">Zinc</keyword>
<accession>Q5B131</accession>
<accession>C8VFJ1</accession>
<proteinExistence type="inferred from homology"/>
<feature type="signal peptide" evidence="2">
    <location>
        <begin position="1"/>
        <end position="17"/>
    </location>
</feature>
<feature type="chain" id="PRO_0000411235" description="Probable carboxypeptidase AN5749">
    <location>
        <begin position="18"/>
        <end position="424"/>
    </location>
</feature>
<feature type="active site" description="Proton acceptor" evidence="1">
    <location>
        <position position="171"/>
    </location>
</feature>
<feature type="binding site" evidence="1">
    <location>
        <position position="139"/>
    </location>
    <ligand>
        <name>Zn(2+)</name>
        <dbReference type="ChEBI" id="CHEBI:29105"/>
        <label>1</label>
    </ligand>
</feature>
<feature type="binding site" evidence="1">
    <location>
        <position position="139"/>
    </location>
    <ligand>
        <name>Zn(2+)</name>
        <dbReference type="ChEBI" id="CHEBI:29105"/>
        <label>2</label>
    </ligand>
</feature>
<feature type="binding site" evidence="1">
    <location>
        <position position="172"/>
    </location>
    <ligand>
        <name>Zn(2+)</name>
        <dbReference type="ChEBI" id="CHEBI:29105"/>
        <label>1</label>
    </ligand>
</feature>
<feature type="glycosylation site" description="N-linked (GlcNAc...) asparagine" evidence="2">
    <location>
        <position position="58"/>
    </location>
</feature>
<feature type="glycosylation site" description="N-linked (GlcNAc...) asparagine" evidence="2">
    <location>
        <position position="184"/>
    </location>
</feature>
<feature type="glycosylation site" description="N-linked (GlcNAc...) asparagine" evidence="2">
    <location>
        <position position="323"/>
    </location>
</feature>
<organism>
    <name type="scientific">Emericella nidulans (strain FGSC A4 / ATCC 38163 / CBS 112.46 / NRRL 194 / M139)</name>
    <name type="common">Aspergillus nidulans</name>
    <dbReference type="NCBI Taxonomy" id="227321"/>
    <lineage>
        <taxon>Eukaryota</taxon>
        <taxon>Fungi</taxon>
        <taxon>Dikarya</taxon>
        <taxon>Ascomycota</taxon>
        <taxon>Pezizomycotina</taxon>
        <taxon>Eurotiomycetes</taxon>
        <taxon>Eurotiomycetidae</taxon>
        <taxon>Eurotiales</taxon>
        <taxon>Aspergillaceae</taxon>
        <taxon>Aspergillus</taxon>
        <taxon>Aspergillus subgen. Nidulantes</taxon>
    </lineage>
</organism>
<reference key="1">
    <citation type="journal article" date="2005" name="Nature">
        <title>Sequencing of Aspergillus nidulans and comparative analysis with A. fumigatus and A. oryzae.</title>
        <authorList>
            <person name="Galagan J.E."/>
            <person name="Calvo S.E."/>
            <person name="Cuomo C."/>
            <person name="Ma L.-J."/>
            <person name="Wortman J.R."/>
            <person name="Batzoglou S."/>
            <person name="Lee S.-I."/>
            <person name="Bastuerkmen M."/>
            <person name="Spevak C.C."/>
            <person name="Clutterbuck J."/>
            <person name="Kapitonov V."/>
            <person name="Jurka J."/>
            <person name="Scazzocchio C."/>
            <person name="Farman M.L."/>
            <person name="Butler J."/>
            <person name="Purcell S."/>
            <person name="Harris S."/>
            <person name="Braus G.H."/>
            <person name="Draht O."/>
            <person name="Busch S."/>
            <person name="D'Enfert C."/>
            <person name="Bouchier C."/>
            <person name="Goldman G.H."/>
            <person name="Bell-Pedersen D."/>
            <person name="Griffiths-Jones S."/>
            <person name="Doonan J.H."/>
            <person name="Yu J."/>
            <person name="Vienken K."/>
            <person name="Pain A."/>
            <person name="Freitag M."/>
            <person name="Selker E.U."/>
            <person name="Archer D.B."/>
            <person name="Penalva M.A."/>
            <person name="Oakley B.R."/>
            <person name="Momany M."/>
            <person name="Tanaka T."/>
            <person name="Kumagai T."/>
            <person name="Asai K."/>
            <person name="Machida M."/>
            <person name="Nierman W.C."/>
            <person name="Denning D.W."/>
            <person name="Caddick M.X."/>
            <person name="Hynes M."/>
            <person name="Paoletti M."/>
            <person name="Fischer R."/>
            <person name="Miller B.L."/>
            <person name="Dyer P.S."/>
            <person name="Sachs M.S."/>
            <person name="Osmani S.A."/>
            <person name="Birren B.W."/>
        </authorList>
    </citation>
    <scope>NUCLEOTIDE SEQUENCE [LARGE SCALE GENOMIC DNA]</scope>
    <source>
        <strain>FGSC A4 / ATCC 38163 / CBS 112.46 / NRRL 194 / M139</strain>
    </source>
</reference>
<reference key="2">
    <citation type="journal article" date="2009" name="Fungal Genet. Biol.">
        <title>The 2008 update of the Aspergillus nidulans genome annotation: a community effort.</title>
        <authorList>
            <person name="Wortman J.R."/>
            <person name="Gilsenan J.M."/>
            <person name="Joardar V."/>
            <person name="Deegan J."/>
            <person name="Clutterbuck J."/>
            <person name="Andersen M.R."/>
            <person name="Archer D."/>
            <person name="Bencina M."/>
            <person name="Braus G."/>
            <person name="Coutinho P."/>
            <person name="von Dohren H."/>
            <person name="Doonan J."/>
            <person name="Driessen A.J."/>
            <person name="Durek P."/>
            <person name="Espeso E."/>
            <person name="Fekete E."/>
            <person name="Flipphi M."/>
            <person name="Estrada C.G."/>
            <person name="Geysens S."/>
            <person name="Goldman G."/>
            <person name="de Groot P.W."/>
            <person name="Hansen K."/>
            <person name="Harris S.D."/>
            <person name="Heinekamp T."/>
            <person name="Helmstaedt K."/>
            <person name="Henrissat B."/>
            <person name="Hofmann G."/>
            <person name="Homan T."/>
            <person name="Horio T."/>
            <person name="Horiuchi H."/>
            <person name="James S."/>
            <person name="Jones M."/>
            <person name="Karaffa L."/>
            <person name="Karanyi Z."/>
            <person name="Kato M."/>
            <person name="Keller N."/>
            <person name="Kelly D.E."/>
            <person name="Kiel J.A."/>
            <person name="Kim J.M."/>
            <person name="van der Klei I.J."/>
            <person name="Klis F.M."/>
            <person name="Kovalchuk A."/>
            <person name="Krasevec N."/>
            <person name="Kubicek C.P."/>
            <person name="Liu B."/>
            <person name="Maccabe A."/>
            <person name="Meyer V."/>
            <person name="Mirabito P."/>
            <person name="Miskei M."/>
            <person name="Mos M."/>
            <person name="Mullins J."/>
            <person name="Nelson D.R."/>
            <person name="Nielsen J."/>
            <person name="Oakley B.R."/>
            <person name="Osmani S.A."/>
            <person name="Pakula T."/>
            <person name="Paszewski A."/>
            <person name="Paulsen I."/>
            <person name="Pilsyk S."/>
            <person name="Pocsi I."/>
            <person name="Punt P.J."/>
            <person name="Ram A.F."/>
            <person name="Ren Q."/>
            <person name="Robellet X."/>
            <person name="Robson G."/>
            <person name="Seiboth B."/>
            <person name="van Solingen P."/>
            <person name="Specht T."/>
            <person name="Sun J."/>
            <person name="Taheri-Talesh N."/>
            <person name="Takeshita N."/>
            <person name="Ussery D."/>
            <person name="vanKuyk P.A."/>
            <person name="Visser H."/>
            <person name="van de Vondervoort P.J."/>
            <person name="de Vries R.P."/>
            <person name="Walton J."/>
            <person name="Xiang X."/>
            <person name="Xiong Y."/>
            <person name="Zeng A.P."/>
            <person name="Brandt B.W."/>
            <person name="Cornell M.J."/>
            <person name="van den Hondel C.A."/>
            <person name="Visser J."/>
            <person name="Oliver S.G."/>
            <person name="Turner G."/>
        </authorList>
    </citation>
    <scope>GENOME REANNOTATION</scope>
    <source>
        <strain>FGSC A4 / ATCC 38163 / CBS 112.46 / NRRL 194 / M139</strain>
    </source>
</reference>
<gene>
    <name type="ORF">AN5749</name>
</gene>
<dbReference type="EC" id="3.4.17.-"/>
<dbReference type="EMBL" id="AACD01000098">
    <property type="protein sequence ID" value="EAA62842.1"/>
    <property type="molecule type" value="Genomic_DNA"/>
</dbReference>
<dbReference type="EMBL" id="BN001305">
    <property type="protein sequence ID" value="CBF81283.1"/>
    <property type="molecule type" value="Genomic_DNA"/>
</dbReference>
<dbReference type="RefSeq" id="XP_663353.1">
    <property type="nucleotide sequence ID" value="XM_658261.1"/>
</dbReference>
<dbReference type="SMR" id="Q5B131"/>
<dbReference type="STRING" id="227321.Q5B131"/>
<dbReference type="EnsemblFungi" id="CBF81283">
    <property type="protein sequence ID" value="CBF81283"/>
    <property type="gene ID" value="ANIA_05749"/>
</dbReference>
<dbReference type="KEGG" id="ani:ANIA_05749"/>
<dbReference type="eggNOG" id="KOG2275">
    <property type="taxonomic scope" value="Eukaryota"/>
</dbReference>
<dbReference type="HOGENOM" id="CLU_021802_3_0_1"/>
<dbReference type="InParanoid" id="Q5B131"/>
<dbReference type="OMA" id="RLHKGVM"/>
<dbReference type="OrthoDB" id="3064516at2759"/>
<dbReference type="Proteomes" id="UP000000560">
    <property type="component" value="Chromosome V"/>
</dbReference>
<dbReference type="GO" id="GO:0005576">
    <property type="term" value="C:extracellular region"/>
    <property type="evidence" value="ECO:0007669"/>
    <property type="project" value="UniProtKB-SubCell"/>
</dbReference>
<dbReference type="GO" id="GO:0046872">
    <property type="term" value="F:metal ion binding"/>
    <property type="evidence" value="ECO:0007669"/>
    <property type="project" value="UniProtKB-KW"/>
</dbReference>
<dbReference type="GO" id="GO:0008233">
    <property type="term" value="F:peptidase activity"/>
    <property type="evidence" value="ECO:0007669"/>
    <property type="project" value="UniProtKB-KW"/>
</dbReference>
<dbReference type="GO" id="GO:0006508">
    <property type="term" value="P:proteolysis"/>
    <property type="evidence" value="ECO:0007669"/>
    <property type="project" value="UniProtKB-KW"/>
</dbReference>
<dbReference type="CDD" id="cd05652">
    <property type="entry name" value="M20_ArgE_DapE-like_fungal"/>
    <property type="match status" value="1"/>
</dbReference>
<dbReference type="Gene3D" id="3.30.70.360">
    <property type="match status" value="1"/>
</dbReference>
<dbReference type="Gene3D" id="3.40.630.10">
    <property type="entry name" value="Zn peptidases"/>
    <property type="match status" value="1"/>
</dbReference>
<dbReference type="InterPro" id="IPR001261">
    <property type="entry name" value="ArgE/DapE_CS"/>
</dbReference>
<dbReference type="InterPro" id="IPR036264">
    <property type="entry name" value="Bact_exopeptidase_dim_dom"/>
</dbReference>
<dbReference type="InterPro" id="IPR002933">
    <property type="entry name" value="Peptidase_M20"/>
</dbReference>
<dbReference type="InterPro" id="IPR011650">
    <property type="entry name" value="Peptidase_M20_dimer"/>
</dbReference>
<dbReference type="InterPro" id="IPR050072">
    <property type="entry name" value="Peptidase_M20A"/>
</dbReference>
<dbReference type="PANTHER" id="PTHR43808">
    <property type="entry name" value="ACETYLORNITHINE DEACETYLASE"/>
    <property type="match status" value="1"/>
</dbReference>
<dbReference type="PANTHER" id="PTHR43808:SF8">
    <property type="entry name" value="PEPTIDASE M20 DIMERISATION DOMAIN-CONTAINING PROTEIN"/>
    <property type="match status" value="1"/>
</dbReference>
<dbReference type="Pfam" id="PF07687">
    <property type="entry name" value="M20_dimer"/>
    <property type="match status" value="1"/>
</dbReference>
<dbReference type="Pfam" id="PF01546">
    <property type="entry name" value="Peptidase_M20"/>
    <property type="match status" value="1"/>
</dbReference>
<dbReference type="SUPFAM" id="SSF55031">
    <property type="entry name" value="Bacterial exopeptidase dimerisation domain"/>
    <property type="match status" value="1"/>
</dbReference>
<dbReference type="SUPFAM" id="SSF53187">
    <property type="entry name" value="Zn-dependent exopeptidases"/>
    <property type="match status" value="1"/>
</dbReference>
<dbReference type="PROSITE" id="PS00758">
    <property type="entry name" value="ARGE_DAPE_CPG2_1"/>
    <property type="match status" value="1"/>
</dbReference>
<protein>
    <recommendedName>
        <fullName>Probable carboxypeptidase AN5749</fullName>
        <ecNumber>3.4.17.-</ecNumber>
    </recommendedName>
    <alternativeName>
        <fullName>Peptidase M20 domain-containing protein AN5749</fullName>
    </alternativeName>
</protein>
<evidence type="ECO:0000250" key="1"/>
<evidence type="ECO:0000255" key="2"/>
<evidence type="ECO:0000305" key="3"/>
<name>P20D1_EMENI</name>
<comment type="cofactor">
    <cofactor evidence="1">
        <name>Zn(2+)</name>
        <dbReference type="ChEBI" id="CHEBI:29105"/>
    </cofactor>
    <text evidence="1">Binds 2 Zn(2+) ions per subunit.</text>
</comment>
<comment type="subcellular location">
    <subcellularLocation>
        <location evidence="3">Secreted</location>
    </subcellularLocation>
</comment>
<comment type="similarity">
    <text evidence="3">Belongs to the peptidase M20A family.</text>
</comment>